<dbReference type="EC" id="2.1.2.1" evidence="1"/>
<dbReference type="EMBL" id="AE009949">
    <property type="protein sequence ID" value="AAL97727.1"/>
    <property type="molecule type" value="Genomic_DNA"/>
</dbReference>
<dbReference type="RefSeq" id="WP_011017761.1">
    <property type="nucleotide sequence ID" value="NC_003485.1"/>
</dbReference>
<dbReference type="SMR" id="Q8P122"/>
<dbReference type="KEGG" id="spm:spyM18_1105"/>
<dbReference type="HOGENOM" id="CLU_022477_2_1_9"/>
<dbReference type="UniPathway" id="UPA00193"/>
<dbReference type="UniPathway" id="UPA00288">
    <property type="reaction ID" value="UER01023"/>
</dbReference>
<dbReference type="GO" id="GO:0005829">
    <property type="term" value="C:cytosol"/>
    <property type="evidence" value="ECO:0007669"/>
    <property type="project" value="TreeGrafter"/>
</dbReference>
<dbReference type="GO" id="GO:0004372">
    <property type="term" value="F:glycine hydroxymethyltransferase activity"/>
    <property type="evidence" value="ECO:0007669"/>
    <property type="project" value="UniProtKB-UniRule"/>
</dbReference>
<dbReference type="GO" id="GO:0030170">
    <property type="term" value="F:pyridoxal phosphate binding"/>
    <property type="evidence" value="ECO:0007669"/>
    <property type="project" value="UniProtKB-UniRule"/>
</dbReference>
<dbReference type="GO" id="GO:0019264">
    <property type="term" value="P:glycine biosynthetic process from serine"/>
    <property type="evidence" value="ECO:0007669"/>
    <property type="project" value="UniProtKB-UniRule"/>
</dbReference>
<dbReference type="GO" id="GO:0035999">
    <property type="term" value="P:tetrahydrofolate interconversion"/>
    <property type="evidence" value="ECO:0007669"/>
    <property type="project" value="UniProtKB-UniRule"/>
</dbReference>
<dbReference type="CDD" id="cd00378">
    <property type="entry name" value="SHMT"/>
    <property type="match status" value="1"/>
</dbReference>
<dbReference type="FunFam" id="3.40.640.10:FF:000001">
    <property type="entry name" value="Serine hydroxymethyltransferase"/>
    <property type="match status" value="1"/>
</dbReference>
<dbReference type="Gene3D" id="3.90.1150.10">
    <property type="entry name" value="Aspartate Aminotransferase, domain 1"/>
    <property type="match status" value="1"/>
</dbReference>
<dbReference type="Gene3D" id="3.40.640.10">
    <property type="entry name" value="Type I PLP-dependent aspartate aminotransferase-like (Major domain)"/>
    <property type="match status" value="1"/>
</dbReference>
<dbReference type="HAMAP" id="MF_00051">
    <property type="entry name" value="SHMT"/>
    <property type="match status" value="1"/>
</dbReference>
<dbReference type="InterPro" id="IPR015424">
    <property type="entry name" value="PyrdxlP-dep_Trfase"/>
</dbReference>
<dbReference type="InterPro" id="IPR015421">
    <property type="entry name" value="PyrdxlP-dep_Trfase_major"/>
</dbReference>
<dbReference type="InterPro" id="IPR015422">
    <property type="entry name" value="PyrdxlP-dep_Trfase_small"/>
</dbReference>
<dbReference type="InterPro" id="IPR001085">
    <property type="entry name" value="Ser_HO-MeTrfase"/>
</dbReference>
<dbReference type="InterPro" id="IPR049943">
    <property type="entry name" value="Ser_HO-MeTrfase-like"/>
</dbReference>
<dbReference type="InterPro" id="IPR019798">
    <property type="entry name" value="Ser_HO-MeTrfase_PLP_BS"/>
</dbReference>
<dbReference type="InterPro" id="IPR039429">
    <property type="entry name" value="SHMT-like_dom"/>
</dbReference>
<dbReference type="NCBIfam" id="NF000586">
    <property type="entry name" value="PRK00011.1"/>
    <property type="match status" value="1"/>
</dbReference>
<dbReference type="PANTHER" id="PTHR11680">
    <property type="entry name" value="SERINE HYDROXYMETHYLTRANSFERASE"/>
    <property type="match status" value="1"/>
</dbReference>
<dbReference type="PANTHER" id="PTHR11680:SF35">
    <property type="entry name" value="SERINE HYDROXYMETHYLTRANSFERASE 1"/>
    <property type="match status" value="1"/>
</dbReference>
<dbReference type="Pfam" id="PF00464">
    <property type="entry name" value="SHMT"/>
    <property type="match status" value="1"/>
</dbReference>
<dbReference type="PIRSF" id="PIRSF000412">
    <property type="entry name" value="SHMT"/>
    <property type="match status" value="1"/>
</dbReference>
<dbReference type="SUPFAM" id="SSF53383">
    <property type="entry name" value="PLP-dependent transferases"/>
    <property type="match status" value="1"/>
</dbReference>
<dbReference type="PROSITE" id="PS00096">
    <property type="entry name" value="SHMT"/>
    <property type="match status" value="1"/>
</dbReference>
<gene>
    <name evidence="1" type="primary">glyA</name>
    <name type="ordered locus">spyM18_1105</name>
</gene>
<keyword id="KW-0028">Amino-acid biosynthesis</keyword>
<keyword id="KW-0963">Cytoplasm</keyword>
<keyword id="KW-0554">One-carbon metabolism</keyword>
<keyword id="KW-0663">Pyridoxal phosphate</keyword>
<keyword id="KW-0808">Transferase</keyword>
<proteinExistence type="inferred from homology"/>
<name>GLYA_STRP8</name>
<feature type="chain" id="PRO_0000113679" description="Serine hydroxymethyltransferase">
    <location>
        <begin position="1"/>
        <end position="418"/>
    </location>
</feature>
<feature type="binding site" evidence="1">
    <location>
        <position position="121"/>
    </location>
    <ligand>
        <name>(6S)-5,6,7,8-tetrahydrofolate</name>
        <dbReference type="ChEBI" id="CHEBI:57453"/>
    </ligand>
</feature>
<feature type="binding site" evidence="1">
    <location>
        <begin position="125"/>
        <end position="127"/>
    </location>
    <ligand>
        <name>(6S)-5,6,7,8-tetrahydrofolate</name>
        <dbReference type="ChEBI" id="CHEBI:57453"/>
    </ligand>
</feature>
<feature type="binding site" evidence="1">
    <location>
        <begin position="355"/>
        <end position="357"/>
    </location>
    <ligand>
        <name>(6S)-5,6,7,8-tetrahydrofolate</name>
        <dbReference type="ChEBI" id="CHEBI:57453"/>
    </ligand>
</feature>
<feature type="site" description="Plays an important role in substrate specificity" evidence="1">
    <location>
        <position position="229"/>
    </location>
</feature>
<feature type="modified residue" description="N6-(pyridoxal phosphate)lysine" evidence="1">
    <location>
        <position position="230"/>
    </location>
</feature>
<comment type="function">
    <text evidence="1">Catalyzes the reversible interconversion of serine and glycine with tetrahydrofolate (THF) serving as the one-carbon carrier. This reaction serves as the major source of one-carbon groups required for the biosynthesis of purines, thymidylate, methionine, and other important biomolecules. Also exhibits THF-independent aldolase activity toward beta-hydroxyamino acids, producing glycine and aldehydes, via a retro-aldol mechanism.</text>
</comment>
<comment type="catalytic activity">
    <reaction evidence="1">
        <text>(6R)-5,10-methylene-5,6,7,8-tetrahydrofolate + glycine + H2O = (6S)-5,6,7,8-tetrahydrofolate + L-serine</text>
        <dbReference type="Rhea" id="RHEA:15481"/>
        <dbReference type="ChEBI" id="CHEBI:15377"/>
        <dbReference type="ChEBI" id="CHEBI:15636"/>
        <dbReference type="ChEBI" id="CHEBI:33384"/>
        <dbReference type="ChEBI" id="CHEBI:57305"/>
        <dbReference type="ChEBI" id="CHEBI:57453"/>
        <dbReference type="EC" id="2.1.2.1"/>
    </reaction>
</comment>
<comment type="cofactor">
    <cofactor evidence="1">
        <name>pyridoxal 5'-phosphate</name>
        <dbReference type="ChEBI" id="CHEBI:597326"/>
    </cofactor>
</comment>
<comment type="pathway">
    <text evidence="1">One-carbon metabolism; tetrahydrofolate interconversion.</text>
</comment>
<comment type="pathway">
    <text evidence="1">Amino-acid biosynthesis; glycine biosynthesis; glycine from L-serine: step 1/1.</text>
</comment>
<comment type="subunit">
    <text evidence="1">Homodimer.</text>
</comment>
<comment type="subcellular location">
    <subcellularLocation>
        <location evidence="1">Cytoplasm</location>
    </subcellularLocation>
</comment>
<comment type="similarity">
    <text evidence="1">Belongs to the SHMT family.</text>
</comment>
<organism>
    <name type="scientific">Streptococcus pyogenes serotype M18 (strain MGAS8232)</name>
    <dbReference type="NCBI Taxonomy" id="186103"/>
    <lineage>
        <taxon>Bacteria</taxon>
        <taxon>Bacillati</taxon>
        <taxon>Bacillota</taxon>
        <taxon>Bacilli</taxon>
        <taxon>Lactobacillales</taxon>
        <taxon>Streptococcaceae</taxon>
        <taxon>Streptococcus</taxon>
    </lineage>
</organism>
<evidence type="ECO:0000255" key="1">
    <source>
        <dbReference type="HAMAP-Rule" id="MF_00051"/>
    </source>
</evidence>
<accession>Q8P122</accession>
<protein>
    <recommendedName>
        <fullName evidence="1">Serine hydroxymethyltransferase</fullName>
        <shortName evidence="1">SHMT</shortName>
        <shortName evidence="1">Serine methylase</shortName>
        <ecNumber evidence="1">2.1.2.1</ecNumber>
    </recommendedName>
</protein>
<reference key="1">
    <citation type="journal article" date="2002" name="Proc. Natl. Acad. Sci. U.S.A.">
        <title>Genome sequence and comparative microarray analysis of serotype M18 group A Streptococcus strains associated with acute rheumatic fever outbreaks.</title>
        <authorList>
            <person name="Smoot J.C."/>
            <person name="Barbian K.D."/>
            <person name="Van Gompel J.J."/>
            <person name="Smoot L.M."/>
            <person name="Chaussee M.S."/>
            <person name="Sylva G.L."/>
            <person name="Sturdevant D.E."/>
            <person name="Ricklefs S.M."/>
            <person name="Porcella S.F."/>
            <person name="Parkins L.D."/>
            <person name="Beres S.B."/>
            <person name="Campbell D.S."/>
            <person name="Smith T.M."/>
            <person name="Zhang Q."/>
            <person name="Kapur V."/>
            <person name="Daly J.A."/>
            <person name="Veasy L.G."/>
            <person name="Musser J.M."/>
        </authorList>
    </citation>
    <scope>NUCLEOTIDE SEQUENCE [LARGE SCALE GENOMIC DNA]</scope>
    <source>
        <strain>MGAS8232</strain>
    </source>
</reference>
<sequence>MIFDKGNVEDFDKELWDAIHAEEERQEHHIELIASENMVSKAVMAAQGSVLTNKYAEGYPGNRYYGGTECVDIVETLAIERAKKLFGAAFANVQAHSGSQANAAAYMALIEAGDTVLGMDLAAGGHLTHGSPVNFSGKTYHFVGYSVDADTEMLNYEAILEQAKAVQPKLIVAGASAYSRSIDFEKFRAIADHVGAYLMVDMAHIAGLVAAGVHPSPVPYAHIVTSTTHKTLRGPRGGLILTNDEALAKKINSAVFPGLQGGPLEHVIAAKAVAFKEALDPAFKDYAQAIIDNTAAMAAVFAQDDRFRLISGGTDNHVFLVDVTKVIANGKLAQNLLDEVNITLNKNAIPFETLSPFKTSGIRIGCAAITSRGMGVKESQTIARLIIKALVNHNQETILEEVRQEVRQLTDAFPLYKK</sequence>